<proteinExistence type="evidence at protein level"/>
<reference key="1">
    <citation type="journal article" date="2004" name="Nat. Biotechnol.">
        <title>The genome sequence of the anaerobic, sulfate-reducing bacterium Desulfovibrio vulgaris Hildenborough.</title>
        <authorList>
            <person name="Heidelberg J.F."/>
            <person name="Seshadri R."/>
            <person name="Haveman S.A."/>
            <person name="Hemme C.L."/>
            <person name="Paulsen I.T."/>
            <person name="Kolonay J.F."/>
            <person name="Eisen J.A."/>
            <person name="Ward N.L."/>
            <person name="Methe B.A."/>
            <person name="Brinkac L.M."/>
            <person name="Daugherty S.C."/>
            <person name="DeBoy R.T."/>
            <person name="Dodson R.J."/>
            <person name="Durkin A.S."/>
            <person name="Madupu R."/>
            <person name="Nelson W.C."/>
            <person name="Sullivan S.A."/>
            <person name="Fouts D.E."/>
            <person name="Haft D.H."/>
            <person name="Selengut J."/>
            <person name="Peterson J.D."/>
            <person name="Davidsen T.M."/>
            <person name="Zafar N."/>
            <person name="Zhou L."/>
            <person name="Radune D."/>
            <person name="Dimitrov G."/>
            <person name="Hance M."/>
            <person name="Tran K."/>
            <person name="Khouri H.M."/>
            <person name="Gill J."/>
            <person name="Utterback T.R."/>
            <person name="Feldblyum T.V."/>
            <person name="Wall J.D."/>
            <person name="Voordouw G."/>
            <person name="Fraser C.M."/>
        </authorList>
    </citation>
    <scope>NUCLEOTIDE SEQUENCE [LARGE SCALE GENOMIC DNA]</scope>
    <source>
        <strain>ATCC 29579 / DSM 644 / CCUG 34227 / NCIMB 8303 / VKM B-1760 / Hildenborough</strain>
        <plasmid>pDV</plasmid>
    </source>
</reference>
<reference key="2">
    <citation type="journal article" date="2021" name="Protein J.">
        <title>Expression, Purification and Characterization of a ZIP Family Transporter from Desulfovibrio vulgaris.</title>
        <authorList>
            <person name="Ma C."/>
            <person name="Gong C."/>
        </authorList>
    </citation>
    <scope>FUNCTION</scope>
    <scope>TRANSPORTER ACTIVITY</scope>
    <scope>BIOPHYSICOCHEMICAL PROPERTIES</scope>
    <scope>SUBCELLULAR LOCATION</scope>
    <source>
        <strain>ATCC 29579 / DSM 644 / CCUG 34227 / NCIMB 8303 / VKM B-1760 / Hildenborough</strain>
    </source>
</reference>
<keyword id="KW-0997">Cell inner membrane</keyword>
<keyword id="KW-1003">Cell membrane</keyword>
<keyword id="KW-0406">Ion transport</keyword>
<keyword id="KW-0408">Iron</keyword>
<keyword id="KW-0472">Membrane</keyword>
<keyword id="KW-0479">Metal-binding</keyword>
<keyword id="KW-0614">Plasmid</keyword>
<keyword id="KW-1185">Reference proteome</keyword>
<keyword id="KW-0812">Transmembrane</keyword>
<keyword id="KW-1133">Transmembrane helix</keyword>
<keyword id="KW-0813">Transport</keyword>
<keyword id="KW-0862">Zinc</keyword>
<keyword id="KW-0864">Zinc transport</keyword>
<sequence length="277" mass="29595">MIDDGNVLLAFGLTLFAGLATGVGSAIAFFARRTDTRFLAVALGFSAGVMIYVSFVEIFRKAYEVLATQTTEVLASWYTVAAFFSGALLIAVIDKLVPGYENPHEMHTVEEMDMGRAALPQDTKHDFVRLKRAGVLAAVAIGIHNFPEGLAAFSAALSDPALGVAIAVAIAIHNIPEGMAVSVPIYYATGDRRKAFLYSFLSGVSEPIGALVGYVVLRPFFTPMVFGLLFASVAGIMVYISLDQLLPSAEEYGEHHLCILGVFSGMGVMALSLLLFL</sequence>
<feature type="chain" id="PRO_0000461052" description="Zinc transporter ZupT">
    <location>
        <begin position="1"/>
        <end position="277"/>
    </location>
</feature>
<feature type="transmembrane region" description="Helical" evidence="1">
    <location>
        <begin position="7"/>
        <end position="27"/>
    </location>
</feature>
<feature type="transmembrane region" description="Helical" evidence="1">
    <location>
        <begin position="38"/>
        <end position="58"/>
    </location>
</feature>
<feature type="transmembrane region" description="Helical" evidence="1">
    <location>
        <begin position="73"/>
        <end position="93"/>
    </location>
</feature>
<feature type="transmembrane region" description="Helical" evidence="1">
    <location>
        <begin position="133"/>
        <end position="155"/>
    </location>
</feature>
<feature type="transmembrane region" description="Helical" evidence="1">
    <location>
        <begin position="165"/>
        <end position="187"/>
    </location>
</feature>
<feature type="transmembrane region" description="Helical" evidence="1">
    <location>
        <begin position="196"/>
        <end position="216"/>
    </location>
</feature>
<feature type="transmembrane region" description="Helical" evidence="1">
    <location>
        <begin position="220"/>
        <end position="240"/>
    </location>
</feature>
<feature type="transmembrane region" description="Helical" evidence="1">
    <location>
        <begin position="257"/>
        <end position="277"/>
    </location>
</feature>
<feature type="binding site" description="M2 metal binding site" evidence="1">
    <location>
        <position position="145"/>
    </location>
    <ligand>
        <name>Fe(2+)</name>
        <dbReference type="ChEBI" id="CHEBI:29033"/>
    </ligand>
</feature>
<feature type="binding site" description="M2 metal binding site" evidence="1">
    <location>
        <position position="148"/>
    </location>
    <ligand>
        <name>Fe(2+)</name>
        <dbReference type="ChEBI" id="CHEBI:29033"/>
    </ligand>
</feature>
<feature type="binding site" description="M1 metal binding site" evidence="1">
    <location>
        <position position="148"/>
    </location>
    <ligand>
        <name>Zn(2+)</name>
        <dbReference type="ChEBI" id="CHEBI:29105"/>
    </ligand>
</feature>
<feature type="binding site" description="M1 metal binding site" evidence="1">
    <location>
        <position position="173"/>
    </location>
    <ligand>
        <name>Zn(2+)</name>
        <dbReference type="ChEBI" id="CHEBI:29105"/>
    </ligand>
</feature>
<feature type="binding site" description="M2 metal binding site" evidence="1">
    <location>
        <position position="174"/>
    </location>
    <ligand>
        <name>Fe(2+)</name>
        <dbReference type="ChEBI" id="CHEBI:29033"/>
    </ligand>
</feature>
<feature type="binding site" description="M2 metal binding site" evidence="1">
    <location>
        <position position="177"/>
    </location>
    <ligand>
        <name>Fe(2+)</name>
        <dbReference type="ChEBI" id="CHEBI:29033"/>
    </ligand>
</feature>
<feature type="binding site" description="M1 metal binding site" evidence="1">
    <location>
        <position position="177"/>
    </location>
    <ligand>
        <name>Zn(2+)</name>
        <dbReference type="ChEBI" id="CHEBI:29105"/>
    </ligand>
</feature>
<feature type="binding site" description="M2 metal binding site" evidence="1">
    <location>
        <position position="206"/>
    </location>
    <ligand>
        <name>Fe(2+)</name>
        <dbReference type="ChEBI" id="CHEBI:29033"/>
    </ligand>
</feature>
<organism>
    <name type="scientific">Nitratidesulfovibrio vulgaris (strain ATCC 29579 / DSM 644 / CCUG 34227 / NCIMB 8303 / VKM B-1760 / Hildenborough)</name>
    <name type="common">Desulfovibrio vulgaris</name>
    <dbReference type="NCBI Taxonomy" id="882"/>
    <lineage>
        <taxon>Bacteria</taxon>
        <taxon>Pseudomonadati</taxon>
        <taxon>Thermodesulfobacteriota</taxon>
        <taxon>Desulfovibrionia</taxon>
        <taxon>Desulfovibrionales</taxon>
        <taxon>Desulfovibrionaceae</taxon>
        <taxon>Nitratidesulfovibrio</taxon>
    </lineage>
</organism>
<accession>Q72WF3</accession>
<gene>
    <name evidence="1" type="primary">zupT</name>
    <name evidence="4" type="ordered locus">DVUA0136</name>
</gene>
<dbReference type="EMBL" id="AE017286">
    <property type="protein sequence ID" value="AAS94460.1"/>
    <property type="molecule type" value="Genomic_DNA"/>
</dbReference>
<dbReference type="RefSeq" id="WP_011176713.1">
    <property type="nucleotide sequence ID" value="NC_005863.1"/>
</dbReference>
<dbReference type="RefSeq" id="YP_009176.1">
    <property type="nucleotide sequence ID" value="NC_005863.1"/>
</dbReference>
<dbReference type="SMR" id="Q72WF3"/>
<dbReference type="TCDB" id="2.A.5.5.11">
    <property type="family name" value="the zinc (zn(2+))-iron (fe(2+)) permease (zip) family"/>
</dbReference>
<dbReference type="EnsemblBacteria" id="AAS94460">
    <property type="protein sequence ID" value="AAS94460"/>
    <property type="gene ID" value="DVUA0136"/>
</dbReference>
<dbReference type="KEGG" id="dvu:DVUA0136"/>
<dbReference type="PATRIC" id="fig|882.5.peg.3226"/>
<dbReference type="HOGENOM" id="CLU_015114_1_3_7"/>
<dbReference type="OrthoDB" id="9787346at2"/>
<dbReference type="PhylomeDB" id="Q72WF3"/>
<dbReference type="Proteomes" id="UP000002194">
    <property type="component" value="Plasmid pDV"/>
</dbReference>
<dbReference type="GO" id="GO:0005886">
    <property type="term" value="C:plasma membrane"/>
    <property type="evidence" value="ECO:0007669"/>
    <property type="project" value="UniProtKB-SubCell"/>
</dbReference>
<dbReference type="GO" id="GO:0046872">
    <property type="term" value="F:metal ion binding"/>
    <property type="evidence" value="ECO:0007669"/>
    <property type="project" value="UniProtKB-KW"/>
</dbReference>
<dbReference type="GO" id="GO:0005385">
    <property type="term" value="F:zinc ion transmembrane transporter activity"/>
    <property type="evidence" value="ECO:0007669"/>
    <property type="project" value="UniProtKB-UniRule"/>
</dbReference>
<dbReference type="HAMAP" id="MF_00548">
    <property type="entry name" value="ZupT"/>
    <property type="match status" value="1"/>
</dbReference>
<dbReference type="InterPro" id="IPR003689">
    <property type="entry name" value="ZIP"/>
</dbReference>
<dbReference type="InterPro" id="IPR023498">
    <property type="entry name" value="Zn_transptr_ZupT"/>
</dbReference>
<dbReference type="NCBIfam" id="NF003243">
    <property type="entry name" value="PRK04201.1"/>
    <property type="match status" value="1"/>
</dbReference>
<dbReference type="PANTHER" id="PTHR11040:SF205">
    <property type="entry name" value="ZINC TRANSPORTER ZUPT"/>
    <property type="match status" value="1"/>
</dbReference>
<dbReference type="PANTHER" id="PTHR11040">
    <property type="entry name" value="ZINC/IRON TRANSPORTER"/>
    <property type="match status" value="1"/>
</dbReference>
<dbReference type="Pfam" id="PF02535">
    <property type="entry name" value="Zip"/>
    <property type="match status" value="1"/>
</dbReference>
<comment type="function">
    <text evidence="1 2">Mediates zinc uptake (PubMed:34101092). May also transport other divalent cations (By similarity).</text>
</comment>
<comment type="catalytic activity">
    <reaction evidence="1 2">
        <text>Zn(2+)(in) = Zn(2+)(out)</text>
        <dbReference type="Rhea" id="RHEA:29351"/>
        <dbReference type="ChEBI" id="CHEBI:29105"/>
    </reaction>
</comment>
<comment type="biophysicochemical properties">
    <kinetics>
        <KM evidence="2">234.6 uM for Zn(2+)</KM>
    </kinetics>
</comment>
<comment type="subcellular location">
    <subcellularLocation>
        <location evidence="1 2">Cell inner membrane</location>
        <topology evidence="1">Multi-pass membrane protein</topology>
    </subcellularLocation>
</comment>
<comment type="similarity">
    <text evidence="1">Belongs to the ZIP transporter (TC 2.A.5) family. ZupT subfamily.</text>
</comment>
<protein>
    <recommendedName>
        <fullName evidence="1">Zinc transporter ZupT</fullName>
    </recommendedName>
    <alternativeName>
        <fullName evidence="3">dvZip</fullName>
    </alternativeName>
</protein>
<name>ZUPT_NITV2</name>
<evidence type="ECO:0000255" key="1">
    <source>
        <dbReference type="HAMAP-Rule" id="MF_00548"/>
    </source>
</evidence>
<evidence type="ECO:0000269" key="2">
    <source>
    </source>
</evidence>
<evidence type="ECO:0000303" key="3">
    <source>
    </source>
</evidence>
<evidence type="ECO:0000312" key="4">
    <source>
        <dbReference type="EMBL" id="AAS94460.1"/>
    </source>
</evidence>
<geneLocation type="plasmid" evidence="4">
    <name>pDV</name>
</geneLocation>